<proteinExistence type="inferred from homology"/>
<reference key="1">
    <citation type="journal article" date="2009" name="ISME J.">
        <title>The genome sequence of the psychrophilic archaeon, Methanococcoides burtonii: the role of genome evolution in cold adaptation.</title>
        <authorList>
            <person name="Allen M.A."/>
            <person name="Lauro F.M."/>
            <person name="Williams T.J."/>
            <person name="Burg D."/>
            <person name="Siddiqui K.S."/>
            <person name="De Francisci D."/>
            <person name="Chong K.W."/>
            <person name="Pilak O."/>
            <person name="Chew H.H."/>
            <person name="De Maere M.Z."/>
            <person name="Ting L."/>
            <person name="Katrib M."/>
            <person name="Ng C."/>
            <person name="Sowers K.R."/>
            <person name="Galperin M.Y."/>
            <person name="Anderson I.J."/>
            <person name="Ivanova N."/>
            <person name="Dalin E."/>
            <person name="Martinez M."/>
            <person name="Lapidus A."/>
            <person name="Hauser L."/>
            <person name="Land M."/>
            <person name="Thomas T."/>
            <person name="Cavicchioli R."/>
        </authorList>
    </citation>
    <scope>NUCLEOTIDE SEQUENCE [LARGE SCALE GENOMIC DNA]</scope>
    <source>
        <strain>DSM 6242 / NBRC 107633 / OCM 468 / ACE-M</strain>
    </source>
</reference>
<evidence type="ECO:0000255" key="1">
    <source>
        <dbReference type="HAMAP-Rule" id="MF_00559"/>
    </source>
</evidence>
<accession>Q12XM4</accession>
<protein>
    <recommendedName>
        <fullName evidence="1">Glyceraldehyde-3-phosphate dehydrogenase</fullName>
        <shortName evidence="1">GAPDH</shortName>
        <ecNumber evidence="1">1.2.1.59</ecNumber>
    </recommendedName>
    <alternativeName>
        <fullName evidence="1">NAD(P)-dependent glyceraldehyde-3-phosphate dehydrogenase</fullName>
    </alternativeName>
</protein>
<name>G3P_METBU</name>
<organism>
    <name type="scientific">Methanococcoides burtonii (strain DSM 6242 / NBRC 107633 / OCM 468 / ACE-M)</name>
    <dbReference type="NCBI Taxonomy" id="259564"/>
    <lineage>
        <taxon>Archaea</taxon>
        <taxon>Methanobacteriati</taxon>
        <taxon>Methanobacteriota</taxon>
        <taxon>Stenosarchaea group</taxon>
        <taxon>Methanomicrobia</taxon>
        <taxon>Methanosarcinales</taxon>
        <taxon>Methanosarcinaceae</taxon>
        <taxon>Methanococcoides</taxon>
    </lineage>
</organism>
<dbReference type="EC" id="1.2.1.59" evidence="1"/>
<dbReference type="EMBL" id="CP000300">
    <property type="protein sequence ID" value="ABE51802.1"/>
    <property type="molecule type" value="Genomic_DNA"/>
</dbReference>
<dbReference type="RefSeq" id="WP_011498955.1">
    <property type="nucleotide sequence ID" value="NC_007955.1"/>
</dbReference>
<dbReference type="SMR" id="Q12XM4"/>
<dbReference type="STRING" id="259564.Mbur_0851"/>
<dbReference type="GeneID" id="3996756"/>
<dbReference type="KEGG" id="mbu:Mbur_0851"/>
<dbReference type="HOGENOM" id="CLU_069533_0_0_2"/>
<dbReference type="OrthoDB" id="295712at2157"/>
<dbReference type="UniPathway" id="UPA00109">
    <property type="reaction ID" value="UER00184"/>
</dbReference>
<dbReference type="Proteomes" id="UP000001979">
    <property type="component" value="Chromosome"/>
</dbReference>
<dbReference type="GO" id="GO:0005737">
    <property type="term" value="C:cytoplasm"/>
    <property type="evidence" value="ECO:0007669"/>
    <property type="project" value="UniProtKB-SubCell"/>
</dbReference>
<dbReference type="GO" id="GO:0008839">
    <property type="term" value="F:4-hydroxy-tetrahydrodipicolinate reductase"/>
    <property type="evidence" value="ECO:0007669"/>
    <property type="project" value="InterPro"/>
</dbReference>
<dbReference type="GO" id="GO:0004365">
    <property type="term" value="F:glyceraldehyde-3-phosphate dehydrogenase (NAD+) (phosphorylating) activity"/>
    <property type="evidence" value="ECO:0007669"/>
    <property type="project" value="UniProtKB-UniRule"/>
</dbReference>
<dbReference type="GO" id="GO:0047100">
    <property type="term" value="F:glyceraldehyde-3-phosphate dehydrogenase (NADP+) (phosphorylating) activity"/>
    <property type="evidence" value="ECO:0007669"/>
    <property type="project" value="RHEA"/>
</dbReference>
<dbReference type="GO" id="GO:0051287">
    <property type="term" value="F:NAD binding"/>
    <property type="evidence" value="ECO:0007669"/>
    <property type="project" value="InterPro"/>
</dbReference>
<dbReference type="GO" id="GO:0050661">
    <property type="term" value="F:NADP binding"/>
    <property type="evidence" value="ECO:0007669"/>
    <property type="project" value="InterPro"/>
</dbReference>
<dbReference type="GO" id="GO:0006096">
    <property type="term" value="P:glycolytic process"/>
    <property type="evidence" value="ECO:0007669"/>
    <property type="project" value="UniProtKB-UniRule"/>
</dbReference>
<dbReference type="GO" id="GO:0009089">
    <property type="term" value="P:lysine biosynthetic process via diaminopimelate"/>
    <property type="evidence" value="ECO:0007669"/>
    <property type="project" value="InterPro"/>
</dbReference>
<dbReference type="CDD" id="cd18127">
    <property type="entry name" value="GAPDH_II_C"/>
    <property type="match status" value="1"/>
</dbReference>
<dbReference type="CDD" id="cd02278">
    <property type="entry name" value="GAPDH_II_N"/>
    <property type="match status" value="1"/>
</dbReference>
<dbReference type="Gene3D" id="3.30.360.10">
    <property type="entry name" value="Dihydrodipicolinate Reductase, domain 2"/>
    <property type="match status" value="1"/>
</dbReference>
<dbReference type="Gene3D" id="3.40.50.720">
    <property type="entry name" value="NAD(P)-binding Rossmann-like Domain"/>
    <property type="match status" value="1"/>
</dbReference>
<dbReference type="HAMAP" id="MF_00559">
    <property type="entry name" value="G3P_dehdrog_arch"/>
    <property type="match status" value="1"/>
</dbReference>
<dbReference type="InterPro" id="IPR000846">
    <property type="entry name" value="DapB_N"/>
</dbReference>
<dbReference type="InterPro" id="IPR020831">
    <property type="entry name" value="GlycerAld/Erythrose_P_DH"/>
</dbReference>
<dbReference type="InterPro" id="IPR020830">
    <property type="entry name" value="GlycerAld_3-P_DH_AS"/>
</dbReference>
<dbReference type="InterPro" id="IPR020829">
    <property type="entry name" value="GlycerAld_3-P_DH_cat"/>
</dbReference>
<dbReference type="InterPro" id="IPR020828">
    <property type="entry name" value="GlycerAld_3-P_DH_NAD(P)-bd"/>
</dbReference>
<dbReference type="InterPro" id="IPR006436">
    <property type="entry name" value="Glyceraldehyde-3-P_DH_2_arc"/>
</dbReference>
<dbReference type="InterPro" id="IPR036291">
    <property type="entry name" value="NAD(P)-bd_dom_sf"/>
</dbReference>
<dbReference type="NCBIfam" id="TIGR01546">
    <property type="entry name" value="GAPDH-II_archae"/>
    <property type="match status" value="1"/>
</dbReference>
<dbReference type="NCBIfam" id="NF003251">
    <property type="entry name" value="PRK04207.1"/>
    <property type="match status" value="1"/>
</dbReference>
<dbReference type="Pfam" id="PF01113">
    <property type="entry name" value="DapB_N"/>
    <property type="match status" value="1"/>
</dbReference>
<dbReference type="Pfam" id="PF02800">
    <property type="entry name" value="Gp_dh_C"/>
    <property type="match status" value="1"/>
</dbReference>
<dbReference type="PIRSF" id="PIRSF000149">
    <property type="entry name" value="GAP_DH"/>
    <property type="match status" value="1"/>
</dbReference>
<dbReference type="SMART" id="SM00846">
    <property type="entry name" value="Gp_dh_N"/>
    <property type="match status" value="1"/>
</dbReference>
<dbReference type="SUPFAM" id="SSF55347">
    <property type="entry name" value="Glyceraldehyde-3-phosphate dehydrogenase-like, C-terminal domain"/>
    <property type="match status" value="1"/>
</dbReference>
<dbReference type="SUPFAM" id="SSF51735">
    <property type="entry name" value="NAD(P)-binding Rossmann-fold domains"/>
    <property type="match status" value="1"/>
</dbReference>
<dbReference type="PROSITE" id="PS00071">
    <property type="entry name" value="GAPDH"/>
    <property type="match status" value="1"/>
</dbReference>
<sequence>MTKVKVAINGYGTIGKRVADAVALQDDMEIIGIAKTRPNFETVMAKDKGFNVYTLADRVGAMEKEGIEVSGTVEEMIKAADVVVDCTPGKVGATNKDLYEKAGIKAIWQGGEAHTLTGCSFNAETNYDEALGKDFVRVVSCNTTGLCRVLSPLDKEFGVKKARVTLLRRAADPGDIKTGPINAIVPNPIKLPSHHGPDVKTVIPNIDIATTAVKLPTTLMHLHTINLELEKECTAEDVESVLAEQSRVRFVGQGITSTAEIMELAKDLGRSRGDMWENCIWNESITMYEGELYFFQAIHQESDVIPENIDAIRAMMELESDASRSIEITNKTMGI</sequence>
<keyword id="KW-0963">Cytoplasm</keyword>
<keyword id="KW-0324">Glycolysis</keyword>
<keyword id="KW-0520">NAD</keyword>
<keyword id="KW-0521">NADP</keyword>
<keyword id="KW-0560">Oxidoreductase</keyword>
<feature type="chain" id="PRO_0000300972" description="Glyceraldehyde-3-phosphate dehydrogenase">
    <location>
        <begin position="1"/>
        <end position="335"/>
    </location>
</feature>
<feature type="active site" description="Nucleophile" evidence="1">
    <location>
        <position position="141"/>
    </location>
</feature>
<feature type="binding site" evidence="1">
    <location>
        <begin position="13"/>
        <end position="14"/>
    </location>
    <ligand>
        <name>NAD(+)</name>
        <dbReference type="ChEBI" id="CHEBI:57540"/>
    </ligand>
</feature>
<feature type="binding site" evidence="1">
    <location>
        <position position="111"/>
    </location>
    <ligand>
        <name>NAD(+)</name>
        <dbReference type="ChEBI" id="CHEBI:57540"/>
    </ligand>
</feature>
<feature type="binding site" evidence="1">
    <location>
        <begin position="140"/>
        <end position="142"/>
    </location>
    <ligand>
        <name>D-glyceraldehyde 3-phosphate</name>
        <dbReference type="ChEBI" id="CHEBI:59776"/>
    </ligand>
</feature>
<feature type="binding site" evidence="1">
    <location>
        <position position="169"/>
    </location>
    <ligand>
        <name>NAD(+)</name>
        <dbReference type="ChEBI" id="CHEBI:57540"/>
    </ligand>
</feature>
<feature type="binding site" evidence="1">
    <location>
        <begin position="195"/>
        <end position="196"/>
    </location>
    <ligand>
        <name>D-glyceraldehyde 3-phosphate</name>
        <dbReference type="ChEBI" id="CHEBI:59776"/>
    </ligand>
</feature>
<feature type="binding site" evidence="1">
    <location>
        <position position="300"/>
    </location>
    <ligand>
        <name>NAD(+)</name>
        <dbReference type="ChEBI" id="CHEBI:57540"/>
    </ligand>
</feature>
<comment type="catalytic activity">
    <reaction evidence="1">
        <text>D-glyceraldehyde 3-phosphate + phosphate + NADP(+) = (2R)-3-phospho-glyceroyl phosphate + NADPH + H(+)</text>
        <dbReference type="Rhea" id="RHEA:10296"/>
        <dbReference type="ChEBI" id="CHEBI:15378"/>
        <dbReference type="ChEBI" id="CHEBI:43474"/>
        <dbReference type="ChEBI" id="CHEBI:57604"/>
        <dbReference type="ChEBI" id="CHEBI:57783"/>
        <dbReference type="ChEBI" id="CHEBI:58349"/>
        <dbReference type="ChEBI" id="CHEBI:59776"/>
        <dbReference type="EC" id="1.2.1.59"/>
    </reaction>
</comment>
<comment type="catalytic activity">
    <reaction evidence="1">
        <text>D-glyceraldehyde 3-phosphate + phosphate + NAD(+) = (2R)-3-phospho-glyceroyl phosphate + NADH + H(+)</text>
        <dbReference type="Rhea" id="RHEA:10300"/>
        <dbReference type="ChEBI" id="CHEBI:15378"/>
        <dbReference type="ChEBI" id="CHEBI:43474"/>
        <dbReference type="ChEBI" id="CHEBI:57540"/>
        <dbReference type="ChEBI" id="CHEBI:57604"/>
        <dbReference type="ChEBI" id="CHEBI:57945"/>
        <dbReference type="ChEBI" id="CHEBI:59776"/>
        <dbReference type="EC" id="1.2.1.59"/>
    </reaction>
</comment>
<comment type="pathway">
    <text evidence="1">Carbohydrate degradation; glycolysis; pyruvate from D-glyceraldehyde 3-phosphate: step 1/5.</text>
</comment>
<comment type="subunit">
    <text evidence="1">Homotetramer.</text>
</comment>
<comment type="subcellular location">
    <subcellularLocation>
        <location evidence="1">Cytoplasm</location>
    </subcellularLocation>
</comment>
<comment type="similarity">
    <text evidence="1">Belongs to the glyceraldehyde-3-phosphate dehydrogenase family.</text>
</comment>
<gene>
    <name evidence="1" type="primary">gap</name>
    <name type="ordered locus">Mbur_0851</name>
</gene>